<dbReference type="EC" id="6.1.1.19" evidence="1"/>
<dbReference type="EMBL" id="AL591688">
    <property type="protein sequence ID" value="CAC46102.1"/>
    <property type="molecule type" value="Genomic_DNA"/>
</dbReference>
<dbReference type="RefSeq" id="NP_385629.1">
    <property type="nucleotide sequence ID" value="NC_003047.1"/>
</dbReference>
<dbReference type="RefSeq" id="WP_010969275.1">
    <property type="nucleotide sequence ID" value="NC_003047.1"/>
</dbReference>
<dbReference type="SMR" id="Q92Q31"/>
<dbReference type="EnsemblBacteria" id="CAC46102">
    <property type="protein sequence ID" value="CAC46102"/>
    <property type="gene ID" value="SMc02073"/>
</dbReference>
<dbReference type="KEGG" id="sme:SMc02073"/>
<dbReference type="PATRIC" id="fig|266834.11.peg.2946"/>
<dbReference type="eggNOG" id="COG0018">
    <property type="taxonomic scope" value="Bacteria"/>
</dbReference>
<dbReference type="HOGENOM" id="CLU_006406_0_1_5"/>
<dbReference type="OrthoDB" id="9803211at2"/>
<dbReference type="Proteomes" id="UP000001976">
    <property type="component" value="Chromosome"/>
</dbReference>
<dbReference type="GO" id="GO:0005737">
    <property type="term" value="C:cytoplasm"/>
    <property type="evidence" value="ECO:0007669"/>
    <property type="project" value="UniProtKB-SubCell"/>
</dbReference>
<dbReference type="GO" id="GO:0004814">
    <property type="term" value="F:arginine-tRNA ligase activity"/>
    <property type="evidence" value="ECO:0007669"/>
    <property type="project" value="UniProtKB-UniRule"/>
</dbReference>
<dbReference type="GO" id="GO:0005524">
    <property type="term" value="F:ATP binding"/>
    <property type="evidence" value="ECO:0007669"/>
    <property type="project" value="UniProtKB-UniRule"/>
</dbReference>
<dbReference type="GO" id="GO:0006420">
    <property type="term" value="P:arginyl-tRNA aminoacylation"/>
    <property type="evidence" value="ECO:0007669"/>
    <property type="project" value="UniProtKB-UniRule"/>
</dbReference>
<dbReference type="CDD" id="cd00671">
    <property type="entry name" value="ArgRS_core"/>
    <property type="match status" value="1"/>
</dbReference>
<dbReference type="FunFam" id="1.10.730.10:FF:000008">
    <property type="entry name" value="Arginine--tRNA ligase"/>
    <property type="match status" value="1"/>
</dbReference>
<dbReference type="Gene3D" id="3.30.1360.70">
    <property type="entry name" value="Arginyl tRNA synthetase N-terminal domain"/>
    <property type="match status" value="1"/>
</dbReference>
<dbReference type="Gene3D" id="3.40.50.620">
    <property type="entry name" value="HUPs"/>
    <property type="match status" value="1"/>
</dbReference>
<dbReference type="Gene3D" id="1.10.730.10">
    <property type="entry name" value="Isoleucyl-tRNA Synthetase, Domain 1"/>
    <property type="match status" value="1"/>
</dbReference>
<dbReference type="HAMAP" id="MF_00123">
    <property type="entry name" value="Arg_tRNA_synth"/>
    <property type="match status" value="1"/>
</dbReference>
<dbReference type="InterPro" id="IPR001412">
    <property type="entry name" value="aa-tRNA-synth_I_CS"/>
</dbReference>
<dbReference type="InterPro" id="IPR001278">
    <property type="entry name" value="Arg-tRNA-ligase"/>
</dbReference>
<dbReference type="InterPro" id="IPR005148">
    <property type="entry name" value="Arg-tRNA-synth_N"/>
</dbReference>
<dbReference type="InterPro" id="IPR036695">
    <property type="entry name" value="Arg-tRNA-synth_N_sf"/>
</dbReference>
<dbReference type="InterPro" id="IPR035684">
    <property type="entry name" value="ArgRS_core"/>
</dbReference>
<dbReference type="InterPro" id="IPR008909">
    <property type="entry name" value="DALR_anticod-bd"/>
</dbReference>
<dbReference type="InterPro" id="IPR014729">
    <property type="entry name" value="Rossmann-like_a/b/a_fold"/>
</dbReference>
<dbReference type="InterPro" id="IPR009080">
    <property type="entry name" value="tRNAsynth_Ia_anticodon-bd"/>
</dbReference>
<dbReference type="NCBIfam" id="TIGR00456">
    <property type="entry name" value="argS"/>
    <property type="match status" value="1"/>
</dbReference>
<dbReference type="PANTHER" id="PTHR11956:SF5">
    <property type="entry name" value="ARGININE--TRNA LIGASE, CYTOPLASMIC"/>
    <property type="match status" value="1"/>
</dbReference>
<dbReference type="PANTHER" id="PTHR11956">
    <property type="entry name" value="ARGINYL-TRNA SYNTHETASE"/>
    <property type="match status" value="1"/>
</dbReference>
<dbReference type="Pfam" id="PF03485">
    <property type="entry name" value="Arg_tRNA_synt_N"/>
    <property type="match status" value="1"/>
</dbReference>
<dbReference type="Pfam" id="PF05746">
    <property type="entry name" value="DALR_1"/>
    <property type="match status" value="1"/>
</dbReference>
<dbReference type="Pfam" id="PF00750">
    <property type="entry name" value="tRNA-synt_1d"/>
    <property type="match status" value="2"/>
</dbReference>
<dbReference type="PRINTS" id="PR01038">
    <property type="entry name" value="TRNASYNTHARG"/>
</dbReference>
<dbReference type="SMART" id="SM01016">
    <property type="entry name" value="Arg_tRNA_synt_N"/>
    <property type="match status" value="1"/>
</dbReference>
<dbReference type="SMART" id="SM00836">
    <property type="entry name" value="DALR_1"/>
    <property type="match status" value="1"/>
</dbReference>
<dbReference type="SUPFAM" id="SSF47323">
    <property type="entry name" value="Anticodon-binding domain of a subclass of class I aminoacyl-tRNA synthetases"/>
    <property type="match status" value="1"/>
</dbReference>
<dbReference type="SUPFAM" id="SSF55190">
    <property type="entry name" value="Arginyl-tRNA synthetase (ArgRS), N-terminal 'additional' domain"/>
    <property type="match status" value="1"/>
</dbReference>
<dbReference type="SUPFAM" id="SSF52374">
    <property type="entry name" value="Nucleotidylyl transferase"/>
    <property type="match status" value="1"/>
</dbReference>
<dbReference type="PROSITE" id="PS00178">
    <property type="entry name" value="AA_TRNA_LIGASE_I"/>
    <property type="match status" value="1"/>
</dbReference>
<organism>
    <name type="scientific">Rhizobium meliloti (strain 1021)</name>
    <name type="common">Ensifer meliloti</name>
    <name type="synonym">Sinorhizobium meliloti</name>
    <dbReference type="NCBI Taxonomy" id="266834"/>
    <lineage>
        <taxon>Bacteria</taxon>
        <taxon>Pseudomonadati</taxon>
        <taxon>Pseudomonadota</taxon>
        <taxon>Alphaproteobacteria</taxon>
        <taxon>Hyphomicrobiales</taxon>
        <taxon>Rhizobiaceae</taxon>
        <taxon>Sinorhizobium/Ensifer group</taxon>
        <taxon>Sinorhizobium</taxon>
    </lineage>
</organism>
<name>SYR_RHIME</name>
<evidence type="ECO:0000255" key="1">
    <source>
        <dbReference type="HAMAP-Rule" id="MF_00123"/>
    </source>
</evidence>
<gene>
    <name evidence="1" type="primary">argS</name>
    <name type="ordered locus">R01523</name>
    <name type="ORF">SMc02073</name>
</gene>
<comment type="catalytic activity">
    <reaction evidence="1">
        <text>tRNA(Arg) + L-arginine + ATP = L-arginyl-tRNA(Arg) + AMP + diphosphate</text>
        <dbReference type="Rhea" id="RHEA:20301"/>
        <dbReference type="Rhea" id="RHEA-COMP:9658"/>
        <dbReference type="Rhea" id="RHEA-COMP:9673"/>
        <dbReference type="ChEBI" id="CHEBI:30616"/>
        <dbReference type="ChEBI" id="CHEBI:32682"/>
        <dbReference type="ChEBI" id="CHEBI:33019"/>
        <dbReference type="ChEBI" id="CHEBI:78442"/>
        <dbReference type="ChEBI" id="CHEBI:78513"/>
        <dbReference type="ChEBI" id="CHEBI:456215"/>
        <dbReference type="EC" id="6.1.1.19"/>
    </reaction>
</comment>
<comment type="subunit">
    <text evidence="1">Monomer.</text>
</comment>
<comment type="subcellular location">
    <subcellularLocation>
        <location evidence="1">Cytoplasm</location>
    </subcellularLocation>
</comment>
<comment type="similarity">
    <text evidence="1">Belongs to the class-I aminoacyl-tRNA synthetase family.</text>
</comment>
<protein>
    <recommendedName>
        <fullName evidence="1">Arginine--tRNA ligase</fullName>
        <ecNumber evidence="1">6.1.1.19</ecNumber>
    </recommendedName>
    <alternativeName>
        <fullName evidence="1">Arginyl-tRNA synthetase</fullName>
        <shortName evidence="1">ArgRS</shortName>
    </alternativeName>
</protein>
<feature type="chain" id="PRO_0000151597" description="Arginine--tRNA ligase">
    <location>
        <begin position="1"/>
        <end position="585"/>
    </location>
</feature>
<feature type="short sequence motif" description="'HIGH' region">
    <location>
        <begin position="131"/>
        <end position="141"/>
    </location>
</feature>
<reference key="1">
    <citation type="journal article" date="2001" name="Proc. Natl. Acad. Sci. U.S.A.">
        <title>Analysis of the chromosome sequence of the legume symbiont Sinorhizobium meliloti strain 1021.</title>
        <authorList>
            <person name="Capela D."/>
            <person name="Barloy-Hubler F."/>
            <person name="Gouzy J."/>
            <person name="Bothe G."/>
            <person name="Ampe F."/>
            <person name="Batut J."/>
            <person name="Boistard P."/>
            <person name="Becker A."/>
            <person name="Boutry M."/>
            <person name="Cadieu E."/>
            <person name="Dreano S."/>
            <person name="Gloux S."/>
            <person name="Godrie T."/>
            <person name="Goffeau A."/>
            <person name="Kahn D."/>
            <person name="Kiss E."/>
            <person name="Lelaure V."/>
            <person name="Masuy D."/>
            <person name="Pohl T."/>
            <person name="Portetelle D."/>
            <person name="Puehler A."/>
            <person name="Purnelle B."/>
            <person name="Ramsperger U."/>
            <person name="Renard C."/>
            <person name="Thebault P."/>
            <person name="Vandenbol M."/>
            <person name="Weidner S."/>
            <person name="Galibert F."/>
        </authorList>
    </citation>
    <scope>NUCLEOTIDE SEQUENCE [LARGE SCALE GENOMIC DNA]</scope>
    <source>
        <strain>1021</strain>
    </source>
</reference>
<reference key="2">
    <citation type="journal article" date="2001" name="Science">
        <title>The composite genome of the legume symbiont Sinorhizobium meliloti.</title>
        <authorList>
            <person name="Galibert F."/>
            <person name="Finan T.M."/>
            <person name="Long S.R."/>
            <person name="Puehler A."/>
            <person name="Abola P."/>
            <person name="Ampe F."/>
            <person name="Barloy-Hubler F."/>
            <person name="Barnett M.J."/>
            <person name="Becker A."/>
            <person name="Boistard P."/>
            <person name="Bothe G."/>
            <person name="Boutry M."/>
            <person name="Bowser L."/>
            <person name="Buhrmester J."/>
            <person name="Cadieu E."/>
            <person name="Capela D."/>
            <person name="Chain P."/>
            <person name="Cowie A."/>
            <person name="Davis R.W."/>
            <person name="Dreano S."/>
            <person name="Federspiel N.A."/>
            <person name="Fisher R.F."/>
            <person name="Gloux S."/>
            <person name="Godrie T."/>
            <person name="Goffeau A."/>
            <person name="Golding B."/>
            <person name="Gouzy J."/>
            <person name="Gurjal M."/>
            <person name="Hernandez-Lucas I."/>
            <person name="Hong A."/>
            <person name="Huizar L."/>
            <person name="Hyman R.W."/>
            <person name="Jones T."/>
            <person name="Kahn D."/>
            <person name="Kahn M.L."/>
            <person name="Kalman S."/>
            <person name="Keating D.H."/>
            <person name="Kiss E."/>
            <person name="Komp C."/>
            <person name="Lelaure V."/>
            <person name="Masuy D."/>
            <person name="Palm C."/>
            <person name="Peck M.C."/>
            <person name="Pohl T.M."/>
            <person name="Portetelle D."/>
            <person name="Purnelle B."/>
            <person name="Ramsperger U."/>
            <person name="Surzycki R."/>
            <person name="Thebault P."/>
            <person name="Vandenbol M."/>
            <person name="Vorhoelter F.J."/>
            <person name="Weidner S."/>
            <person name="Wells D.H."/>
            <person name="Wong K."/>
            <person name="Yeh K.-C."/>
            <person name="Batut J."/>
        </authorList>
    </citation>
    <scope>NUCLEOTIDE SEQUENCE [LARGE SCALE GENOMIC DNA]</scope>
    <source>
        <strain>1021</strain>
    </source>
</reference>
<proteinExistence type="inferred from homology"/>
<keyword id="KW-0030">Aminoacyl-tRNA synthetase</keyword>
<keyword id="KW-0067">ATP-binding</keyword>
<keyword id="KW-0963">Cytoplasm</keyword>
<keyword id="KW-0436">Ligase</keyword>
<keyword id="KW-0547">Nucleotide-binding</keyword>
<keyword id="KW-0648">Protein biosynthesis</keyword>
<keyword id="KW-1185">Reference proteome</keyword>
<accession>Q92Q31</accession>
<sequence>MNLFTDFEARINRILESIEIIREKRSELDFGRINVEPPRDASHGDVATNAAMVLAKPLGMNPRALADLIVDKLGQDPEVAGVSVAGPGFINVRLSVSYWQKLLAAITRAGVDYGRSTFGAGRKINVEYVSANPTGPMHVGHCRGAVVGDALANLLAFAGYDVTKEYYINDAGSQIEVLARSAFLRYRQALGEDIAEIPAGLYPGDYLVPVGEALADEYGTSLRIMPEDKWVPLVKERVIDAMMAMIREDLAALNVNHDVFFSERALHDNGAARIRTAINDLTFKGHVYKGTLPPPKGQLPEDWEDREQTLFRSTEVGDDIDRPLIKSDGSYTYFAADVAYFKDKFDRGFHEMIYVLGADHGGYVKRLEALARAISGGTAKLTVLLCQLVKLYRNGEPVKMSKRSGDFVTLRDVVDEVGRDPVRFMMLYRKSSEPLDFDFAKVTEQSKDNPVFYVQYAHARCRSVFRQAAEAFPDLDLSSVDFAAAAGAIVDPTEMQLVAKLAEYPRVVEAAALSHEPHRIAFYLYDLAAVFHGHWNKGKENPELRFVNDKNRELSIARLGLVHAVASVLKSGLSITGTSAPDEMR</sequence>